<protein>
    <recommendedName>
        <fullName evidence="8">Diacylglycerol kinase iota</fullName>
        <shortName evidence="10">DAG kinase iota</shortName>
        <ecNumber evidence="6">2.7.1.107</ecNumber>
    </recommendedName>
</protein>
<gene>
    <name evidence="11" type="primary">Dgki</name>
</gene>
<organism>
    <name type="scientific">Rattus norvegicus</name>
    <name type="common">Rat</name>
    <dbReference type="NCBI Taxonomy" id="10116"/>
    <lineage>
        <taxon>Eukaryota</taxon>
        <taxon>Metazoa</taxon>
        <taxon>Chordata</taxon>
        <taxon>Craniata</taxon>
        <taxon>Vertebrata</taxon>
        <taxon>Euteleostomi</taxon>
        <taxon>Mammalia</taxon>
        <taxon>Eutheria</taxon>
        <taxon>Euarchontoglires</taxon>
        <taxon>Glires</taxon>
        <taxon>Rodentia</taxon>
        <taxon>Myomorpha</taxon>
        <taxon>Muroidea</taxon>
        <taxon>Muridae</taxon>
        <taxon>Murinae</taxon>
        <taxon>Rattus</taxon>
    </lineage>
</organism>
<proteinExistence type="evidence at protein level"/>
<accession>F1MAB7</accession>
<accession>Q810C3</accession>
<accession>Q810C4</accession>
<accession>Q810C5</accession>
<name>DGKI_RAT</name>
<sequence>MDAAGRGCHLLPLPAARGPARAPAASSALSPAGLCSGTASASSAAAGAVAMNPSSSAGEERGATGGSSSSGSGAGSCCLGAEGGVDPRGAGAAAAAALEEPAAAGQKEKEEALEEKLRDLTFRKQVSYRKAISRTGLQHLAPAHPLGLPVANGPAKEPRATLDWSENAVNGEHLWLETNVSGDLCYLGEENCQVRFAKSALRRKCAVCKIVVHTACIEQLEKINFRCKPTFREGGSRSPRENFVRHHWVHRRRQEGKCKQCGKGFQQKFSFHSKEIVAISCSWCKQAFHNKVTCFMLHHIEEPCSLGAHAAVIVPPTWIIKVKKPQNSLKASNRKKKRTSFKRKASKRGTEQENKGRPFVIKPISSPLMKPLLVFVNPKSGGNQGTKVLQMFMWYLNPRQVFDLSQEGPKDALELYRKVPNLRILACGGDGTVGWILSILDELQLSPQPPVGVLPLGTGNDLARTLNWGGGYTDEPVSKILCQVEDGTIVQLDRWNLHVERNPDLPPEELEDGVCKLPLNVFNNYFSLGFDAHVTLEFHESREANPEKFNSRFRNKMFYAGAAFSDFLQRSSRDLSKHVKVVCDGTDLTPKIQDLKFQCIVFLNIPRYCAGTMPWGNPGDHHDFEPQRHDDGYIEVIGFTMASLAALQVGGHGERLHQCREVMLLTYKSIPMQVDGEPCRLAPAMIRISLRNQANMVQKSKRRTSMPLLNDPQSVPDRLRIRVNKISLQDYEGLHYDKEKLREASIPLGILVVRGDCDLETCRMYIDRLQEDLQSVSSGSQRVHYQDQETSFPRAISAQRLSPRWCFLDATSADRFYRIDRSQEHLHFVMEISHDEIFILDPDMVVSQQAGTPPGMPDLVVEQASGLSDWWNPALRKRMLSDSGMITPHYEDSDLKDFSHSRVLQSPVSSEDHAILQAVITGDLMKLMESYKNGGSLLIQGPGHCSLLHYAAKTGNGEIVKYILDHGPAELLDMADSETGETALHKAACQRNRAVCQLLVDAGASLRQTDSKGKTPQERAQQAGDPDLAAYLESRQNYKIIGHEDLETAV</sequence>
<reference key="1">
    <citation type="journal article" date="2004" name="J. Biol. Chem.">
        <title>Cloning and characterization of diacylglycerol kinase iota splice variants in rat brain.</title>
        <authorList>
            <person name="Ito T."/>
            <person name="Hozumi Y."/>
            <person name="Sakane F."/>
            <person name="Saino-Saito S."/>
            <person name="Kanoh H."/>
            <person name="Aoyagi M."/>
            <person name="Kondo H."/>
            <person name="Goto K."/>
        </authorList>
    </citation>
    <scope>NUCLEOTIDE SEQUENCE [MRNA] (ISOFORMS 1; 2 AND 3)</scope>
    <scope>FUNCTION (ISOFORMS 2 AND 3)</scope>
    <scope>CATALYTIC ACTIVITY (ISOFORM 2)</scope>
    <scope>ACTIVITY REGULATION</scope>
    <scope>PATHWAY</scope>
    <scope>SUBCELLULAR LOCATION (ISOFORMS 2 AND 3)</scope>
    <scope>TISSUE SPECIFICITY (ISOFORMS 1; 2 AND 3)</scope>
    <source>
        <tissue>Brain</tissue>
    </source>
</reference>
<reference key="2">
    <citation type="journal article" date="2004" name="Nature">
        <title>Genome sequence of the Brown Norway rat yields insights into mammalian evolution.</title>
        <authorList>
            <person name="Gibbs R.A."/>
            <person name="Weinstock G.M."/>
            <person name="Metzker M.L."/>
            <person name="Muzny D.M."/>
            <person name="Sodergren E.J."/>
            <person name="Scherer S."/>
            <person name="Scott G."/>
            <person name="Steffen D."/>
            <person name="Worley K.C."/>
            <person name="Burch P.E."/>
            <person name="Okwuonu G."/>
            <person name="Hines S."/>
            <person name="Lewis L."/>
            <person name="Deramo C."/>
            <person name="Delgado O."/>
            <person name="Dugan-Rocha S."/>
            <person name="Miner G."/>
            <person name="Morgan M."/>
            <person name="Hawes A."/>
            <person name="Gill R."/>
            <person name="Holt R.A."/>
            <person name="Adams M.D."/>
            <person name="Amanatides P.G."/>
            <person name="Baden-Tillson H."/>
            <person name="Barnstead M."/>
            <person name="Chin S."/>
            <person name="Evans C.A."/>
            <person name="Ferriera S."/>
            <person name="Fosler C."/>
            <person name="Glodek A."/>
            <person name="Gu Z."/>
            <person name="Jennings D."/>
            <person name="Kraft C.L."/>
            <person name="Nguyen T."/>
            <person name="Pfannkoch C.M."/>
            <person name="Sitter C."/>
            <person name="Sutton G.G."/>
            <person name="Venter J.C."/>
            <person name="Woodage T."/>
            <person name="Smith D."/>
            <person name="Lee H.-M."/>
            <person name="Gustafson E."/>
            <person name="Cahill P."/>
            <person name="Kana A."/>
            <person name="Doucette-Stamm L."/>
            <person name="Weinstock K."/>
            <person name="Fechtel K."/>
            <person name="Weiss R.B."/>
            <person name="Dunn D.M."/>
            <person name="Green E.D."/>
            <person name="Blakesley R.W."/>
            <person name="Bouffard G.G."/>
            <person name="De Jong P.J."/>
            <person name="Osoegawa K."/>
            <person name="Zhu B."/>
            <person name="Marra M."/>
            <person name="Schein J."/>
            <person name="Bosdet I."/>
            <person name="Fjell C."/>
            <person name="Jones S."/>
            <person name="Krzywinski M."/>
            <person name="Mathewson C."/>
            <person name="Siddiqui A."/>
            <person name="Wye N."/>
            <person name="McPherson J."/>
            <person name="Zhao S."/>
            <person name="Fraser C.M."/>
            <person name="Shetty J."/>
            <person name="Shatsman S."/>
            <person name="Geer K."/>
            <person name="Chen Y."/>
            <person name="Abramzon S."/>
            <person name="Nierman W.C."/>
            <person name="Havlak P.H."/>
            <person name="Chen R."/>
            <person name="Durbin K.J."/>
            <person name="Egan A."/>
            <person name="Ren Y."/>
            <person name="Song X.-Z."/>
            <person name="Li B."/>
            <person name="Liu Y."/>
            <person name="Qin X."/>
            <person name="Cawley S."/>
            <person name="Cooney A.J."/>
            <person name="D'Souza L.M."/>
            <person name="Martin K."/>
            <person name="Wu J.Q."/>
            <person name="Gonzalez-Garay M.L."/>
            <person name="Jackson A.R."/>
            <person name="Kalafus K.J."/>
            <person name="McLeod M.P."/>
            <person name="Milosavljevic A."/>
            <person name="Virk D."/>
            <person name="Volkov A."/>
            <person name="Wheeler D.A."/>
            <person name="Zhang Z."/>
            <person name="Bailey J.A."/>
            <person name="Eichler E.E."/>
            <person name="Tuzun E."/>
            <person name="Birney E."/>
            <person name="Mongin E."/>
            <person name="Ureta-Vidal A."/>
            <person name="Woodwark C."/>
            <person name="Zdobnov E."/>
            <person name="Bork P."/>
            <person name="Suyama M."/>
            <person name="Torrents D."/>
            <person name="Alexandersson M."/>
            <person name="Trask B.J."/>
            <person name="Young J.M."/>
            <person name="Huang H."/>
            <person name="Wang H."/>
            <person name="Xing H."/>
            <person name="Daniels S."/>
            <person name="Gietzen D."/>
            <person name="Schmidt J."/>
            <person name="Stevens K."/>
            <person name="Vitt U."/>
            <person name="Wingrove J."/>
            <person name="Camara F."/>
            <person name="Mar Alba M."/>
            <person name="Abril J.F."/>
            <person name="Guigo R."/>
            <person name="Smit A."/>
            <person name="Dubchak I."/>
            <person name="Rubin E.M."/>
            <person name="Couronne O."/>
            <person name="Poliakov A."/>
            <person name="Huebner N."/>
            <person name="Ganten D."/>
            <person name="Goesele C."/>
            <person name="Hummel O."/>
            <person name="Kreitler T."/>
            <person name="Lee Y.-A."/>
            <person name="Monti J."/>
            <person name="Schulz H."/>
            <person name="Zimdahl H."/>
            <person name="Himmelbauer H."/>
            <person name="Lehrach H."/>
            <person name="Jacob H.J."/>
            <person name="Bromberg S."/>
            <person name="Gullings-Handley J."/>
            <person name="Jensen-Seaman M.I."/>
            <person name="Kwitek A.E."/>
            <person name="Lazar J."/>
            <person name="Pasko D."/>
            <person name="Tonellato P.J."/>
            <person name="Twigger S."/>
            <person name="Ponting C.P."/>
            <person name="Duarte J.M."/>
            <person name="Rice S."/>
            <person name="Goodstadt L."/>
            <person name="Beatson S.A."/>
            <person name="Emes R.D."/>
            <person name="Winter E.E."/>
            <person name="Webber C."/>
            <person name="Brandt P."/>
            <person name="Nyakatura G."/>
            <person name="Adetobi M."/>
            <person name="Chiaromonte F."/>
            <person name="Elnitski L."/>
            <person name="Eswara P."/>
            <person name="Hardison R.C."/>
            <person name="Hou M."/>
            <person name="Kolbe D."/>
            <person name="Makova K."/>
            <person name="Miller W."/>
            <person name="Nekrutenko A."/>
            <person name="Riemer C."/>
            <person name="Schwartz S."/>
            <person name="Taylor J."/>
            <person name="Yang S."/>
            <person name="Zhang Y."/>
            <person name="Lindpaintner K."/>
            <person name="Andrews T.D."/>
            <person name="Caccamo M."/>
            <person name="Clamp M."/>
            <person name="Clarke L."/>
            <person name="Curwen V."/>
            <person name="Durbin R.M."/>
            <person name="Eyras E."/>
            <person name="Searle S.M."/>
            <person name="Cooper G.M."/>
            <person name="Batzoglou S."/>
            <person name="Brudno M."/>
            <person name="Sidow A."/>
            <person name="Stone E.A."/>
            <person name="Payseur B.A."/>
            <person name="Bourque G."/>
            <person name="Lopez-Otin C."/>
            <person name="Puente X.S."/>
            <person name="Chakrabarti K."/>
            <person name="Chatterji S."/>
            <person name="Dewey C."/>
            <person name="Pachter L."/>
            <person name="Bray N."/>
            <person name="Yap V.B."/>
            <person name="Caspi A."/>
            <person name="Tesler G."/>
            <person name="Pevzner P.A."/>
            <person name="Haussler D."/>
            <person name="Roskin K.M."/>
            <person name="Baertsch R."/>
            <person name="Clawson H."/>
            <person name="Furey T.S."/>
            <person name="Hinrichs A.S."/>
            <person name="Karolchik D."/>
            <person name="Kent W.J."/>
            <person name="Rosenbloom K.R."/>
            <person name="Trumbower H."/>
            <person name="Weirauch M."/>
            <person name="Cooper D.N."/>
            <person name="Stenson P.D."/>
            <person name="Ma B."/>
            <person name="Brent M."/>
            <person name="Arumugam M."/>
            <person name="Shteynberg D."/>
            <person name="Copley R.R."/>
            <person name="Taylor M.S."/>
            <person name="Riethman H."/>
            <person name="Mudunuri U."/>
            <person name="Peterson J."/>
            <person name="Guyer M."/>
            <person name="Felsenfeld A."/>
            <person name="Old S."/>
            <person name="Mockrin S."/>
            <person name="Collins F.S."/>
        </authorList>
    </citation>
    <scope>NUCLEOTIDE SEQUENCE [LARGE SCALE GENOMIC DNA]</scope>
    <source>
        <strain>Brown Norway</strain>
    </source>
</reference>
<reference key="3">
    <citation type="journal article" date="2011" name="EMBO J.">
        <title>DGKiota regulates presynaptic release during mGluR-dependent LTD.</title>
        <authorList>
            <person name="Yang J."/>
            <person name="Seo J."/>
            <person name="Nair R."/>
            <person name="Han S."/>
            <person name="Jang S."/>
            <person name="Kim K."/>
            <person name="Han K."/>
            <person name="Paik S.K."/>
            <person name="Choi J."/>
            <person name="Lee S."/>
            <person name="Bae Y.C."/>
            <person name="Topham M.K."/>
            <person name="Prescott S.M."/>
            <person name="Rhee J.S."/>
            <person name="Choi S.Y."/>
            <person name="Kim E."/>
        </authorList>
    </citation>
    <scope>INTERACTION WITH DLG1; DLG2; DLG3 AND DLG4</scope>
    <scope>SUBCELLULAR LOCATION</scope>
    <scope>TISSUE SPECIFICITY</scope>
    <scope>DEVELOPMENTAL STAGE</scope>
    <scope>MOTIF</scope>
</reference>
<reference key="4">
    <citation type="journal article" date="2012" name="Nat. Commun.">
        <title>Quantitative maps of protein phosphorylation sites across 14 different rat organs and tissues.</title>
        <authorList>
            <person name="Lundby A."/>
            <person name="Secher A."/>
            <person name="Lage K."/>
            <person name="Nordsborg N.B."/>
            <person name="Dmytriyev A."/>
            <person name="Lundby C."/>
            <person name="Olsen J.V."/>
        </authorList>
    </citation>
    <scope>IDENTIFICATION BY MASS SPECTROMETRY [LARGE SCALE ANALYSIS]</scope>
</reference>
<evidence type="ECO:0000250" key="1">
    <source>
        <dbReference type="UniProtKB" id="D3YWQ0"/>
    </source>
</evidence>
<evidence type="ECO:0000250" key="2">
    <source>
        <dbReference type="UniProtKB" id="O75912"/>
    </source>
</evidence>
<evidence type="ECO:0000255" key="3"/>
<evidence type="ECO:0000255" key="4">
    <source>
        <dbReference type="PROSITE-ProRule" id="PRU00783"/>
    </source>
</evidence>
<evidence type="ECO:0000256" key="5">
    <source>
        <dbReference type="SAM" id="MobiDB-lite"/>
    </source>
</evidence>
<evidence type="ECO:0000269" key="6">
    <source>
    </source>
</evidence>
<evidence type="ECO:0000269" key="7">
    <source>
    </source>
</evidence>
<evidence type="ECO:0000303" key="8">
    <source>
    </source>
</evidence>
<evidence type="ECO:0000305" key="9"/>
<evidence type="ECO:0000305" key="10">
    <source>
    </source>
</evidence>
<evidence type="ECO:0000312" key="11">
    <source>
        <dbReference type="RGD" id="735049"/>
    </source>
</evidence>
<comment type="function">
    <text evidence="1 6 9">Diacylglycerol kinase that converts diacylglycerol/DAG into phosphatidic acid/phosphatidate/PA and regulates the respective levels of these two bioactive lipids (PubMed:15024004). Thereby, acts as a central switch between the signaling pathways activated by these second messengers with different cellular targets and opposite effects in numerous biological processes (Probable). Has probably no preference for any of the diacylglycerols in terms of the acyl chain composition, especially for the acyl chain at the sn-2 position (PubMed:15024004). By controlling the diacylglycerol/DAG-mediated activation of RASGRP3, negatively regulates the Rap1 signaling pathway. May play a role in presynaptic diacylglycerol/DAG signaling and control neurotransmitter release during metabotropic glutamate receptor-dependent long-term depression (By similarity).</text>
</comment>
<comment type="function">
    <molecule>Isoform 2</molecule>
    <text evidence="6">Has a decreased affinity for ATP and a reduced diacylglycerol kinase activity. Has no preference for any of the diacylglycerols in terms of the acyl chain composition.</text>
</comment>
<comment type="function">
    <molecule>Isoform 3</molecule>
    <text evidence="6">Has no diacylglycerol kinase activity.</text>
</comment>
<comment type="catalytic activity">
    <reaction evidence="6">
        <text>a 1,2-diacyl-sn-glycerol + ATP = a 1,2-diacyl-sn-glycero-3-phosphate + ADP + H(+)</text>
        <dbReference type="Rhea" id="RHEA:10272"/>
        <dbReference type="ChEBI" id="CHEBI:15378"/>
        <dbReference type="ChEBI" id="CHEBI:17815"/>
        <dbReference type="ChEBI" id="CHEBI:30616"/>
        <dbReference type="ChEBI" id="CHEBI:58608"/>
        <dbReference type="ChEBI" id="CHEBI:456216"/>
        <dbReference type="EC" id="2.7.1.107"/>
    </reaction>
    <physiologicalReaction direction="left-to-right" evidence="10">
        <dbReference type="Rhea" id="RHEA:10273"/>
    </physiologicalReaction>
</comment>
<comment type="catalytic activity">
    <reaction evidence="6">
        <text>1,2-di-(9Z-octadecenoyl)-sn-glycerol + ATP = 1,2-di-(9Z-octadecenoyl)-sn-glycero-3-phosphate + ADP + H(+)</text>
        <dbReference type="Rhea" id="RHEA:40327"/>
        <dbReference type="ChEBI" id="CHEBI:15378"/>
        <dbReference type="ChEBI" id="CHEBI:30616"/>
        <dbReference type="ChEBI" id="CHEBI:52333"/>
        <dbReference type="ChEBI" id="CHEBI:74546"/>
        <dbReference type="ChEBI" id="CHEBI:456216"/>
    </reaction>
    <physiologicalReaction direction="left-to-right" evidence="10">
        <dbReference type="Rhea" id="RHEA:40328"/>
    </physiologicalReaction>
</comment>
<comment type="catalytic activity">
    <molecule>Isoform 2</molecule>
    <reaction evidence="6">
        <text>1,2-di-(9Z-octadecenoyl)-sn-glycerol + ATP = 1,2-di-(9Z-octadecenoyl)-sn-glycero-3-phosphate + ADP + H(+)</text>
        <dbReference type="Rhea" id="RHEA:40327"/>
        <dbReference type="ChEBI" id="CHEBI:15378"/>
        <dbReference type="ChEBI" id="CHEBI:30616"/>
        <dbReference type="ChEBI" id="CHEBI:52333"/>
        <dbReference type="ChEBI" id="CHEBI:74546"/>
        <dbReference type="ChEBI" id="CHEBI:456216"/>
    </reaction>
    <physiologicalReaction direction="left-to-right" evidence="10">
        <dbReference type="Rhea" id="RHEA:40328"/>
    </physiologicalReaction>
</comment>
<comment type="catalytic activity">
    <reaction evidence="6">
        <text>1-octadecanoyl-2-(9Z,12Z)-octadecadienoyl-sn-glycerol + ATP = 1-octadecanoyl-2-(9Z,12Z-octadecadienoyl)-sn-glycero-3-phosphate + ADP + H(+)</text>
        <dbReference type="Rhea" id="RHEA:40339"/>
        <dbReference type="ChEBI" id="CHEBI:15378"/>
        <dbReference type="ChEBI" id="CHEBI:30616"/>
        <dbReference type="ChEBI" id="CHEBI:77097"/>
        <dbReference type="ChEBI" id="CHEBI:77098"/>
        <dbReference type="ChEBI" id="CHEBI:456216"/>
    </reaction>
    <physiologicalReaction direction="left-to-right" evidence="10">
        <dbReference type="Rhea" id="RHEA:40340"/>
    </physiologicalReaction>
</comment>
<comment type="catalytic activity">
    <molecule>Isoform 2</molecule>
    <reaction evidence="6">
        <text>1-octadecanoyl-2-(9Z,12Z)-octadecadienoyl-sn-glycerol + ATP = 1-octadecanoyl-2-(9Z,12Z-octadecadienoyl)-sn-glycero-3-phosphate + ADP + H(+)</text>
        <dbReference type="Rhea" id="RHEA:40339"/>
        <dbReference type="ChEBI" id="CHEBI:15378"/>
        <dbReference type="ChEBI" id="CHEBI:30616"/>
        <dbReference type="ChEBI" id="CHEBI:77097"/>
        <dbReference type="ChEBI" id="CHEBI:77098"/>
        <dbReference type="ChEBI" id="CHEBI:456216"/>
    </reaction>
    <physiologicalReaction direction="left-to-right" evidence="10">
        <dbReference type="Rhea" id="RHEA:40340"/>
    </physiologicalReaction>
</comment>
<comment type="catalytic activity">
    <reaction evidence="6">
        <text>1-octadecanoyl-2-(5Z,8Z,11Z,14Z-eicosatetraenoyl)-sn-glycerol + ATP = 1-octadecanoyl-2-(5Z,8Z,11Z,14Z-eicosatetraenoyl)-sn-glycero-3-phosphate + ADP + H(+)</text>
        <dbReference type="Rhea" id="RHEA:40323"/>
        <dbReference type="ChEBI" id="CHEBI:15378"/>
        <dbReference type="ChEBI" id="CHEBI:30616"/>
        <dbReference type="ChEBI" id="CHEBI:75728"/>
        <dbReference type="ChEBI" id="CHEBI:77091"/>
        <dbReference type="ChEBI" id="CHEBI:456216"/>
    </reaction>
    <physiologicalReaction direction="left-to-right" evidence="10">
        <dbReference type="Rhea" id="RHEA:40324"/>
    </physiologicalReaction>
</comment>
<comment type="catalytic activity">
    <molecule>Isoform 2</molecule>
    <reaction evidence="6">
        <text>1-octadecanoyl-2-(5Z,8Z,11Z,14Z-eicosatetraenoyl)-sn-glycerol + ATP = 1-octadecanoyl-2-(5Z,8Z,11Z,14Z-eicosatetraenoyl)-sn-glycero-3-phosphate + ADP + H(+)</text>
        <dbReference type="Rhea" id="RHEA:40323"/>
        <dbReference type="ChEBI" id="CHEBI:15378"/>
        <dbReference type="ChEBI" id="CHEBI:30616"/>
        <dbReference type="ChEBI" id="CHEBI:75728"/>
        <dbReference type="ChEBI" id="CHEBI:77091"/>
        <dbReference type="ChEBI" id="CHEBI:456216"/>
    </reaction>
    <physiologicalReaction direction="left-to-right" evidence="10">
        <dbReference type="Rhea" id="RHEA:40324"/>
    </physiologicalReaction>
</comment>
<comment type="activity regulation">
    <text evidence="6">Activated by phosphatidylserine.</text>
</comment>
<comment type="pathway">
    <text evidence="6">Lipid metabolism; glycerolipid metabolism.</text>
</comment>
<comment type="subunit">
    <text evidence="1 7">Interacts (via PDZ-binding motif) with DLG4; controls the localization of DGKI to the synapse (PubMed:21119615). Interacts (via PDZ-binding motif) with DLG1 (PubMed:21119615). Interacts (via PDZ-binding motif) with DLG2 (PubMed:21119615). Interacts (via PDZ-binding motif) with DLG3 (PubMed:21119615). May interact with RASGRP3; involved in the regulation of RASGRP3 activity (By similarity).</text>
</comment>
<comment type="interaction">
    <interactant intactId="EBI-8523614">
        <id>F1MAB7</id>
    </interactant>
    <interactant intactId="EBI-389325">
        <id>Q62696</id>
        <label>Dlg1</label>
    </interactant>
    <organismsDiffer>false</organismsDiffer>
    <experiments>3</experiments>
</comment>
<comment type="interaction">
    <interactant intactId="EBI-8523614">
        <id>F1MAB7</id>
    </interactant>
    <interactant intactId="EBI-396947">
        <id>Q63622</id>
        <label>Dlg2</label>
    </interactant>
    <organismsDiffer>false</organismsDiffer>
    <experiments>2</experiments>
</comment>
<comment type="interaction">
    <interactant intactId="EBI-8523614">
        <id>F1MAB7</id>
    </interactant>
    <interactant intactId="EBI-375655">
        <id>P31016</id>
        <label>Dlg4</label>
    </interactant>
    <organismsDiffer>false</organismsDiffer>
    <experiments>4</experiments>
</comment>
<comment type="subcellular location">
    <subcellularLocation>
        <location evidence="7">Cell projection</location>
        <location evidence="7">Axon</location>
    </subcellularLocation>
    <subcellularLocation>
        <location evidence="7">Cell projection</location>
        <location evidence="7">Dendrite</location>
    </subcellularLocation>
    <subcellularLocation>
        <location evidence="7">Presynapse</location>
    </subcellularLocation>
    <subcellularLocation>
        <location evidence="7">Postsynapse</location>
    </subcellularLocation>
    <subcellularLocation>
        <location evidence="7">Postsynaptic density</location>
    </subcellularLocation>
    <subcellularLocation>
        <location evidence="7">Synaptic cell membrane</location>
    </subcellularLocation>
    <subcellularLocation>
        <location evidence="7">Cytoplasmic vesicle</location>
        <location evidence="7">Secretory vesicle</location>
        <location evidence="7">Synaptic vesicle membrane</location>
    </subcellularLocation>
    <subcellularLocation>
        <location evidence="6 7">Cytoplasm</location>
        <location evidence="6 7">Cytosol</location>
    </subcellularLocation>
    <subcellularLocation>
        <location evidence="2">Nucleus</location>
    </subcellularLocation>
    <text evidence="2 6 7">Excluded from inhibitory synapses (PubMed:21119615). Localization between cytoplasm and nucleus is regulated by protein kinase C (By similarity). Both in the detergent soluble and particulate fractions (PubMed:15024004).</text>
</comment>
<comment type="subcellular location">
    <molecule>Isoform 2</molecule>
    <subcellularLocation>
        <location evidence="6">Cytoplasm</location>
    </subcellularLocation>
    <text evidence="6">Not detected in detergent soluble fraction.</text>
</comment>
<comment type="subcellular location">
    <molecule>Isoform 3</molecule>
    <subcellularLocation>
        <location evidence="6">Cytoplasm</location>
    </subcellularLocation>
    <text evidence="6">Not detected in detergent soluble fraction.</text>
</comment>
<comment type="alternative products">
    <event type="alternative splicing"/>
    <isoform>
        <id>F1MAB7-1</id>
        <name>1</name>
        <name evidence="8">rDGKi-1</name>
        <sequence type="displayed"/>
    </isoform>
    <isoform>
        <id>F1MAB7-2</id>
        <name>2</name>
        <name evidence="8">rDGKi-2</name>
        <sequence type="described" ref="VSP_060835 VSP_060836"/>
    </isoform>
    <isoform>
        <id>F1MAB7-3</id>
        <name>3</name>
        <name evidence="8">rDGKi-3</name>
        <sequence type="described" ref="VSP_060833 VSP_060834"/>
    </isoform>
</comment>
<comment type="tissue specificity">
    <text evidence="6 7">Specifically expressed in brain (at protein level) (PubMed:15024004, PubMed:21119615). Expressed in hippocampus, cerebellum, brain stem and spinal cord (at protein level) (PubMed:21119615). Highly expressed in hippocampus, cerebellar cortex, olfactory bulb, and olfactory tubercle and to lower extent in the cerebral cortex, caudate putamen, and thalamus. Not detected in the white matter (PubMed:15024004). Also expressed in eye (PubMed:15024004).</text>
</comment>
<comment type="tissue specificity">
    <molecule>Isoform 1</molecule>
    <text evidence="6">Major isoform in brain (at protein level).</text>
</comment>
<comment type="tissue specificity">
    <molecule>Isoform 2</molecule>
    <text evidence="6">Minor isoform in brain (at protein level).</text>
</comment>
<comment type="tissue specificity">
    <molecule>Isoform 3</molecule>
    <text evidence="6">Expressed in brain (at protein level).</text>
</comment>
<comment type="developmental stage">
    <text evidence="7">Expression gradually increases in the first weeks after birth (at protein level).</text>
</comment>
<comment type="similarity">
    <text evidence="9">Belongs to the eukaryotic diacylglycerol kinase family.</text>
</comment>
<dbReference type="EC" id="2.7.1.107" evidence="6"/>
<dbReference type="EMBL" id="AB058962">
    <property type="protein sequence ID" value="BAC66854.1"/>
    <property type="molecule type" value="mRNA"/>
</dbReference>
<dbReference type="EMBL" id="AB058963">
    <property type="protein sequence ID" value="BAC66855.1"/>
    <property type="molecule type" value="mRNA"/>
</dbReference>
<dbReference type="EMBL" id="AB058964">
    <property type="protein sequence ID" value="BAC66856.1"/>
    <property type="molecule type" value="mRNA"/>
</dbReference>
<dbReference type="EMBL" id="AABR07060249">
    <property type="status" value="NOT_ANNOTATED_CDS"/>
    <property type="molecule type" value="Genomic_DNA"/>
</dbReference>
<dbReference type="EMBL" id="AABR07060250">
    <property type="status" value="NOT_ANNOTATED_CDS"/>
    <property type="molecule type" value="Genomic_DNA"/>
</dbReference>
<dbReference type="EMBL" id="AABR07060251">
    <property type="status" value="NOT_ANNOTATED_CDS"/>
    <property type="molecule type" value="Genomic_DNA"/>
</dbReference>
<dbReference type="EMBL" id="AABR07060252">
    <property type="status" value="NOT_ANNOTATED_CDS"/>
    <property type="molecule type" value="Genomic_DNA"/>
</dbReference>
<dbReference type="EMBL" id="AABR07060253">
    <property type="status" value="NOT_ANNOTATED_CDS"/>
    <property type="molecule type" value="Genomic_DNA"/>
</dbReference>
<dbReference type="EMBL" id="AABR07060254">
    <property type="status" value="NOT_ANNOTATED_CDS"/>
    <property type="molecule type" value="Genomic_DNA"/>
</dbReference>
<dbReference type="EMBL" id="AABR07060255">
    <property type="status" value="NOT_ANNOTATED_CDS"/>
    <property type="molecule type" value="Genomic_DNA"/>
</dbReference>
<dbReference type="RefSeq" id="NP_942077.2">
    <molecule id="F1MAB7-1"/>
    <property type="nucleotide sequence ID" value="NM_198782.2"/>
</dbReference>
<dbReference type="RefSeq" id="XP_038964302.1">
    <molecule id="F1MAB7-3"/>
    <property type="nucleotide sequence ID" value="XM_039108374.2"/>
</dbReference>
<dbReference type="SMR" id="F1MAB7"/>
<dbReference type="FunCoup" id="F1MAB7">
    <property type="interactions" value="2413"/>
</dbReference>
<dbReference type="IntAct" id="F1MAB7">
    <property type="interactions" value="8"/>
</dbReference>
<dbReference type="MINT" id="F1MAB7"/>
<dbReference type="STRING" id="10116.ENSRNOP00000034571"/>
<dbReference type="iPTMnet" id="F1MAB7"/>
<dbReference type="PhosphoSitePlus" id="F1MAB7"/>
<dbReference type="PaxDb" id="10116-ENSRNOP00000034571"/>
<dbReference type="Ensembl" id="ENSRNOT00000033268.5">
    <molecule id="F1MAB7-1"/>
    <property type="protein sequence ID" value="ENSRNOP00000034571.3"/>
    <property type="gene ID" value="ENSRNOG00000026705.6"/>
</dbReference>
<dbReference type="GeneID" id="688705"/>
<dbReference type="KEGG" id="rno:688705"/>
<dbReference type="AGR" id="RGD:735049"/>
<dbReference type="CTD" id="9162"/>
<dbReference type="RGD" id="735049">
    <property type="gene designation" value="Dgki"/>
</dbReference>
<dbReference type="eggNOG" id="KOG0782">
    <property type="taxonomic scope" value="Eukaryota"/>
</dbReference>
<dbReference type="GeneTree" id="ENSGT00940000158094"/>
<dbReference type="HOGENOM" id="CLU_003770_4_0_1"/>
<dbReference type="InParanoid" id="F1MAB7"/>
<dbReference type="OrthoDB" id="242257at2759"/>
<dbReference type="TreeFam" id="TF312817"/>
<dbReference type="Reactome" id="R-RNO-114508">
    <property type="pathway name" value="Effects of PIP2 hydrolysis"/>
</dbReference>
<dbReference type="UniPathway" id="UPA00230"/>
<dbReference type="PRO" id="PR:F1MAB7"/>
<dbReference type="Proteomes" id="UP000002494">
    <property type="component" value="Chromosome 4"/>
</dbReference>
<dbReference type="Bgee" id="ENSRNOG00000026705">
    <property type="expression patterns" value="Expressed in frontal cortex and 9 other cell types or tissues"/>
</dbReference>
<dbReference type="ExpressionAtlas" id="F1MAB7">
    <property type="expression patterns" value="baseline and differential"/>
</dbReference>
<dbReference type="GO" id="GO:0043679">
    <property type="term" value="C:axon terminus"/>
    <property type="evidence" value="ECO:0000314"/>
    <property type="project" value="MGI"/>
</dbReference>
<dbReference type="GO" id="GO:0005737">
    <property type="term" value="C:cytoplasm"/>
    <property type="evidence" value="ECO:0000266"/>
    <property type="project" value="RGD"/>
</dbReference>
<dbReference type="GO" id="GO:0005829">
    <property type="term" value="C:cytosol"/>
    <property type="evidence" value="ECO:0000314"/>
    <property type="project" value="MGI"/>
</dbReference>
<dbReference type="GO" id="GO:0043197">
    <property type="term" value="C:dendritic spine"/>
    <property type="evidence" value="ECO:0000266"/>
    <property type="project" value="RGD"/>
</dbReference>
<dbReference type="GO" id="GO:0060076">
    <property type="term" value="C:excitatory synapse"/>
    <property type="evidence" value="ECO:0000314"/>
    <property type="project" value="MGI"/>
</dbReference>
<dbReference type="GO" id="GO:0099147">
    <property type="term" value="C:extrinsic component of postsynaptic density membrane"/>
    <property type="evidence" value="ECO:0000314"/>
    <property type="project" value="SynGO"/>
</dbReference>
<dbReference type="GO" id="GO:0098891">
    <property type="term" value="C:extrinsic component of presynaptic active zone membrane"/>
    <property type="evidence" value="ECO:0000314"/>
    <property type="project" value="SynGO"/>
</dbReference>
<dbReference type="GO" id="GO:0098978">
    <property type="term" value="C:glutamatergic synapse"/>
    <property type="evidence" value="ECO:0000314"/>
    <property type="project" value="SynGO"/>
</dbReference>
<dbReference type="GO" id="GO:0032045">
    <property type="term" value="C:guanyl-nucleotide exchange factor complex"/>
    <property type="evidence" value="ECO:0000266"/>
    <property type="project" value="RGD"/>
</dbReference>
<dbReference type="GO" id="GO:0043025">
    <property type="term" value="C:neuronal cell body"/>
    <property type="evidence" value="ECO:0000314"/>
    <property type="project" value="MGI"/>
</dbReference>
<dbReference type="GO" id="GO:0005634">
    <property type="term" value="C:nucleus"/>
    <property type="evidence" value="ECO:0000266"/>
    <property type="project" value="RGD"/>
</dbReference>
<dbReference type="GO" id="GO:0048471">
    <property type="term" value="C:perinuclear region of cytoplasm"/>
    <property type="evidence" value="ECO:0000266"/>
    <property type="project" value="RGD"/>
</dbReference>
<dbReference type="GO" id="GO:0005886">
    <property type="term" value="C:plasma membrane"/>
    <property type="evidence" value="ECO:0000318"/>
    <property type="project" value="GO_Central"/>
</dbReference>
<dbReference type="GO" id="GO:0014069">
    <property type="term" value="C:postsynaptic density"/>
    <property type="evidence" value="ECO:0000314"/>
    <property type="project" value="MGI"/>
</dbReference>
<dbReference type="GO" id="GO:0048786">
    <property type="term" value="C:presynaptic active zone"/>
    <property type="evidence" value="ECO:0000314"/>
    <property type="project" value="MGI"/>
</dbReference>
<dbReference type="GO" id="GO:0032991">
    <property type="term" value="C:protein-containing complex"/>
    <property type="evidence" value="ECO:0000266"/>
    <property type="project" value="RGD"/>
</dbReference>
<dbReference type="GO" id="GO:0098685">
    <property type="term" value="C:Schaffer collateral - CA1 synapse"/>
    <property type="evidence" value="ECO:0000266"/>
    <property type="project" value="RGD"/>
</dbReference>
<dbReference type="GO" id="GO:0045202">
    <property type="term" value="C:synapse"/>
    <property type="evidence" value="ECO:0000266"/>
    <property type="project" value="RGD"/>
</dbReference>
<dbReference type="GO" id="GO:0097060">
    <property type="term" value="C:synaptic membrane"/>
    <property type="evidence" value="ECO:0000314"/>
    <property type="project" value="MGI"/>
</dbReference>
<dbReference type="GO" id="GO:0008021">
    <property type="term" value="C:synaptic vesicle"/>
    <property type="evidence" value="ECO:0000314"/>
    <property type="project" value="MGI"/>
</dbReference>
<dbReference type="GO" id="GO:0030672">
    <property type="term" value="C:synaptic vesicle membrane"/>
    <property type="evidence" value="ECO:0007669"/>
    <property type="project" value="UniProtKB-SubCell"/>
</dbReference>
<dbReference type="GO" id="GO:0005524">
    <property type="term" value="F:ATP binding"/>
    <property type="evidence" value="ECO:0007669"/>
    <property type="project" value="UniProtKB-KW"/>
</dbReference>
<dbReference type="GO" id="GO:0004143">
    <property type="term" value="F:ATP-dependent diacylglycerol kinase activity"/>
    <property type="evidence" value="ECO:0000314"/>
    <property type="project" value="RGD"/>
</dbReference>
<dbReference type="GO" id="GO:0005095">
    <property type="term" value="F:GTPase inhibitor activity"/>
    <property type="evidence" value="ECO:0000266"/>
    <property type="project" value="RGD"/>
</dbReference>
<dbReference type="GO" id="GO:0031267">
    <property type="term" value="F:small GTPase binding"/>
    <property type="evidence" value="ECO:0000266"/>
    <property type="project" value="RGD"/>
</dbReference>
<dbReference type="GO" id="GO:0046339">
    <property type="term" value="P:diacylglycerol metabolic process"/>
    <property type="evidence" value="ECO:0000314"/>
    <property type="project" value="UniProtKB"/>
</dbReference>
<dbReference type="GO" id="GO:0060079">
    <property type="term" value="P:excitatory postsynaptic potential"/>
    <property type="evidence" value="ECO:0000266"/>
    <property type="project" value="RGD"/>
</dbReference>
<dbReference type="GO" id="GO:0046959">
    <property type="term" value="P:habituation"/>
    <property type="evidence" value="ECO:0000266"/>
    <property type="project" value="RGD"/>
</dbReference>
<dbReference type="GO" id="GO:0035556">
    <property type="term" value="P:intracellular signal transduction"/>
    <property type="evidence" value="ECO:0000318"/>
    <property type="project" value="GO_Central"/>
</dbReference>
<dbReference type="GO" id="GO:0046834">
    <property type="term" value="P:lipid phosphorylation"/>
    <property type="evidence" value="ECO:0000314"/>
    <property type="project" value="UniProtKB"/>
</dbReference>
<dbReference type="GO" id="GO:0007269">
    <property type="term" value="P:neurotransmitter secretion"/>
    <property type="evidence" value="ECO:0000266"/>
    <property type="project" value="RGD"/>
</dbReference>
<dbReference type="GO" id="GO:0006654">
    <property type="term" value="P:phosphatidic acid biosynthetic process"/>
    <property type="evidence" value="ECO:0000314"/>
    <property type="project" value="UniProtKB"/>
</dbReference>
<dbReference type="GO" id="GO:0007200">
    <property type="term" value="P:phospholipase C-activating G protein-coupled receptor signaling pathway"/>
    <property type="evidence" value="ECO:0007669"/>
    <property type="project" value="InterPro"/>
</dbReference>
<dbReference type="GO" id="GO:0046579">
    <property type="term" value="P:positive regulation of Ras protein signal transduction"/>
    <property type="evidence" value="ECO:0000266"/>
    <property type="project" value="RGD"/>
</dbReference>
<dbReference type="GO" id="GO:0099171">
    <property type="term" value="P:presynaptic modulation of chemical synaptic transmission"/>
    <property type="evidence" value="ECO:0000266"/>
    <property type="project" value="RGD"/>
</dbReference>
<dbReference type="GO" id="GO:0007265">
    <property type="term" value="P:Ras protein signal transduction"/>
    <property type="evidence" value="ECO:0000266"/>
    <property type="project" value="RGD"/>
</dbReference>
<dbReference type="GO" id="GO:1900452">
    <property type="term" value="P:regulation of long-term synaptic depression"/>
    <property type="evidence" value="ECO:0000266"/>
    <property type="project" value="RGD"/>
</dbReference>
<dbReference type="GO" id="GO:0051966">
    <property type="term" value="P:regulation of synaptic transmission, glutamatergic"/>
    <property type="evidence" value="ECO:0000266"/>
    <property type="project" value="RGD"/>
</dbReference>
<dbReference type="CDD" id="cd20850">
    <property type="entry name" value="C1_DGKiota_rpt1"/>
    <property type="match status" value="1"/>
</dbReference>
<dbReference type="CDD" id="cd20896">
    <property type="entry name" value="C1_DGKiota_rpt2"/>
    <property type="match status" value="1"/>
</dbReference>
<dbReference type="FunFam" id="1.25.40.20:FF:000061">
    <property type="entry name" value="Diacylglycerol kinase"/>
    <property type="match status" value="1"/>
</dbReference>
<dbReference type="FunFam" id="2.60.200.40:FF:000002">
    <property type="entry name" value="Diacylglycerol kinase"/>
    <property type="match status" value="1"/>
</dbReference>
<dbReference type="FunFam" id="3.30.60.20:FF:000035">
    <property type="entry name" value="Diacylglycerol kinase"/>
    <property type="match status" value="1"/>
</dbReference>
<dbReference type="FunFam" id="3.40.50.10330:FF:000002">
    <property type="entry name" value="Diacylglycerol kinase"/>
    <property type="match status" value="1"/>
</dbReference>
<dbReference type="Gene3D" id="2.60.200.40">
    <property type="match status" value="1"/>
</dbReference>
<dbReference type="Gene3D" id="3.30.60.20">
    <property type="match status" value="1"/>
</dbReference>
<dbReference type="Gene3D" id="1.25.40.20">
    <property type="entry name" value="Ankyrin repeat-containing domain"/>
    <property type="match status" value="1"/>
</dbReference>
<dbReference type="Gene3D" id="3.40.50.10330">
    <property type="entry name" value="Probable inorganic polyphosphate/atp-NAD kinase, domain 1"/>
    <property type="match status" value="1"/>
</dbReference>
<dbReference type="InterPro" id="IPR002110">
    <property type="entry name" value="Ankyrin_rpt"/>
</dbReference>
<dbReference type="InterPro" id="IPR036770">
    <property type="entry name" value="Ankyrin_rpt-contain_sf"/>
</dbReference>
<dbReference type="InterPro" id="IPR017438">
    <property type="entry name" value="ATP-NAD_kinase_N"/>
</dbReference>
<dbReference type="InterPro" id="IPR047486">
    <property type="entry name" value="C1_DGKiota_rpt1"/>
</dbReference>
<dbReference type="InterPro" id="IPR047487">
    <property type="entry name" value="C1_DGKiota_rpt2"/>
</dbReference>
<dbReference type="InterPro" id="IPR037607">
    <property type="entry name" value="DGK"/>
</dbReference>
<dbReference type="InterPro" id="IPR056383">
    <property type="entry name" value="DGKI-like_dom"/>
</dbReference>
<dbReference type="InterPro" id="IPR000756">
    <property type="entry name" value="Diacylglycerol_kin_accessory"/>
</dbReference>
<dbReference type="InterPro" id="IPR001206">
    <property type="entry name" value="Diacylglycerol_kinase_cat_dom"/>
</dbReference>
<dbReference type="InterPro" id="IPR016064">
    <property type="entry name" value="NAD/diacylglycerol_kinase_sf"/>
</dbReference>
<dbReference type="InterPro" id="IPR002219">
    <property type="entry name" value="PE/DAG-bd"/>
</dbReference>
<dbReference type="PANTHER" id="PTHR11255">
    <property type="entry name" value="DIACYLGLYCEROL KINASE"/>
    <property type="match status" value="1"/>
</dbReference>
<dbReference type="PANTHER" id="PTHR11255:SF92">
    <property type="entry name" value="DIACYLGLYCEROL KINASE IOTA"/>
    <property type="match status" value="1"/>
</dbReference>
<dbReference type="Pfam" id="PF12796">
    <property type="entry name" value="Ank_2"/>
    <property type="match status" value="1"/>
</dbReference>
<dbReference type="Pfam" id="PF00130">
    <property type="entry name" value="C1_1"/>
    <property type="match status" value="1"/>
</dbReference>
<dbReference type="Pfam" id="PF00609">
    <property type="entry name" value="DAGK_acc"/>
    <property type="match status" value="1"/>
</dbReference>
<dbReference type="Pfam" id="PF00781">
    <property type="entry name" value="DAGK_cat"/>
    <property type="match status" value="1"/>
</dbReference>
<dbReference type="Pfam" id="PF23578">
    <property type="entry name" value="DGKI"/>
    <property type="match status" value="1"/>
</dbReference>
<dbReference type="SMART" id="SM00248">
    <property type="entry name" value="ANK"/>
    <property type="match status" value="2"/>
</dbReference>
<dbReference type="SMART" id="SM00109">
    <property type="entry name" value="C1"/>
    <property type="match status" value="2"/>
</dbReference>
<dbReference type="SMART" id="SM00045">
    <property type="entry name" value="DAGKa"/>
    <property type="match status" value="1"/>
</dbReference>
<dbReference type="SMART" id="SM00046">
    <property type="entry name" value="DAGKc"/>
    <property type="match status" value="1"/>
</dbReference>
<dbReference type="SUPFAM" id="SSF48403">
    <property type="entry name" value="Ankyrin repeat"/>
    <property type="match status" value="1"/>
</dbReference>
<dbReference type="SUPFAM" id="SSF111331">
    <property type="entry name" value="NAD kinase/diacylglycerol kinase-like"/>
    <property type="match status" value="1"/>
</dbReference>
<dbReference type="PROSITE" id="PS50297">
    <property type="entry name" value="ANK_REP_REGION"/>
    <property type="match status" value="1"/>
</dbReference>
<dbReference type="PROSITE" id="PS50088">
    <property type="entry name" value="ANK_REPEAT"/>
    <property type="match status" value="1"/>
</dbReference>
<dbReference type="PROSITE" id="PS50146">
    <property type="entry name" value="DAGK"/>
    <property type="match status" value="1"/>
</dbReference>
<keyword id="KW-0025">Alternative splicing</keyword>
<keyword id="KW-0040">ANK repeat</keyword>
<keyword id="KW-0067">ATP-binding</keyword>
<keyword id="KW-1003">Cell membrane</keyword>
<keyword id="KW-0966">Cell projection</keyword>
<keyword id="KW-0963">Cytoplasm</keyword>
<keyword id="KW-0968">Cytoplasmic vesicle</keyword>
<keyword id="KW-0418">Kinase</keyword>
<keyword id="KW-0443">Lipid metabolism</keyword>
<keyword id="KW-0472">Membrane</keyword>
<keyword id="KW-0547">Nucleotide-binding</keyword>
<keyword id="KW-0539">Nucleus</keyword>
<keyword id="KW-1185">Reference proteome</keyword>
<keyword id="KW-0677">Repeat</keyword>
<keyword id="KW-0770">Synapse</keyword>
<keyword id="KW-0808">Transferase</keyword>
<feature type="chain" id="PRO_0000451699" description="Diacylglycerol kinase iota">
    <location>
        <begin position="1"/>
        <end position="1050"/>
    </location>
</feature>
<feature type="domain" description="DAGKc" evidence="4">
    <location>
        <begin position="367"/>
        <end position="502"/>
    </location>
</feature>
<feature type="repeat" description="ANK 1" evidence="3">
    <location>
        <begin position="943"/>
        <end position="972"/>
    </location>
</feature>
<feature type="repeat" description="ANK 2" evidence="3">
    <location>
        <begin position="979"/>
        <end position="1008"/>
    </location>
</feature>
<feature type="region of interest" description="Disordered" evidence="5">
    <location>
        <begin position="52"/>
        <end position="73"/>
    </location>
</feature>
<feature type="region of interest" description="Disordered" evidence="5">
    <location>
        <begin position="325"/>
        <end position="356"/>
    </location>
</feature>
<feature type="short sequence motif" description="PDZ-binding" evidence="7">
    <location>
        <begin position="1048"/>
        <end position="1050"/>
    </location>
</feature>
<feature type="compositionally biased region" description="Basic residues" evidence="5">
    <location>
        <begin position="332"/>
        <end position="347"/>
    </location>
</feature>
<feature type="splice variant" id="VSP_060833" description="In isoform 3.">
    <original>CDGTDLTPK</original>
    <variation>LSWMRLSDS</variation>
    <location>
        <begin position="583"/>
        <end position="591"/>
    </location>
</feature>
<feature type="splice variant" id="VSP_060834" description="In isoform 3.">
    <location>
        <begin position="592"/>
        <end position="1050"/>
    </location>
</feature>
<feature type="splice variant" id="VSP_060835" description="In isoform 2.">
    <original>EHLHFVMEISHDEIFIL</original>
    <variation>ACFSPLGTFALCDGDFS</variation>
    <location>
        <begin position="824"/>
        <end position="840"/>
    </location>
</feature>
<feature type="splice variant" id="VSP_060836" description="In isoform 2.">
    <location>
        <begin position="841"/>
        <end position="1050"/>
    </location>
</feature>
<feature type="sequence conflict" description="In Ref. 1; BAC66854/BAC66856/BAC66855." evidence="9" ref="1">
    <original>K</original>
    <variation>I</variation>
    <location>
        <position position="156"/>
    </location>
</feature>
<feature type="sequence conflict" description="In Ref. 1; BAC66854/BAC66856/BAC66855." evidence="9" ref="1">
    <original>N</original>
    <variation>I</variation>
    <location>
        <position position="170"/>
    </location>
</feature>
<feature type="sequence conflict" description="In Ref. 1; BAC66854/BAC66856/BAC66855." evidence="9" ref="1">
    <original>F</original>
    <variation>L</variation>
    <location>
        <position position="359"/>
    </location>
</feature>
<feature type="sequence conflict" description="In Ref. 1; BAC66854/BAC66855." evidence="9" ref="1">
    <original>D</original>
    <variation>E</variation>
    <location>
        <position position="594"/>
    </location>
</feature>